<keyword id="KW-0963">Cytoplasm</keyword>
<keyword id="KW-0489">Methyltransferase</keyword>
<keyword id="KW-1185">Reference proteome</keyword>
<keyword id="KW-0949">S-adenosyl-L-methionine</keyword>
<keyword id="KW-0808">Transferase</keyword>
<protein>
    <recommendedName>
        <fullName evidence="1">Thiopurine S-methyltransferase</fullName>
        <ecNumber evidence="1">2.1.1.67</ecNumber>
    </recommendedName>
    <alternativeName>
        <fullName evidence="1">Thiopurine methyltransferase</fullName>
    </alternativeName>
</protein>
<dbReference type="EC" id="2.1.1.67" evidence="1"/>
<dbReference type="EMBL" id="BX640413">
    <property type="protein sequence ID" value="CAE41176.1"/>
    <property type="molecule type" value="Genomic_DNA"/>
</dbReference>
<dbReference type="RefSeq" id="NP_879683.1">
    <property type="nucleotide sequence ID" value="NC_002929.2"/>
</dbReference>
<dbReference type="RefSeq" id="WP_010930052.1">
    <property type="nucleotide sequence ID" value="NZ_CP039022.1"/>
</dbReference>
<dbReference type="SMR" id="Q7VZM5"/>
<dbReference type="STRING" id="257313.BP0873"/>
<dbReference type="PaxDb" id="257313-BP0873"/>
<dbReference type="KEGG" id="bpe:BP0873"/>
<dbReference type="PATRIC" id="fig|257313.5.peg.929"/>
<dbReference type="eggNOG" id="COG0500">
    <property type="taxonomic scope" value="Bacteria"/>
</dbReference>
<dbReference type="HOGENOM" id="CLU_085515_1_0_4"/>
<dbReference type="Proteomes" id="UP000002676">
    <property type="component" value="Chromosome"/>
</dbReference>
<dbReference type="GO" id="GO:0005737">
    <property type="term" value="C:cytoplasm"/>
    <property type="evidence" value="ECO:0007669"/>
    <property type="project" value="UniProtKB-SubCell"/>
</dbReference>
<dbReference type="GO" id="GO:0008119">
    <property type="term" value="F:thiopurine S-methyltransferase activity"/>
    <property type="evidence" value="ECO:0007669"/>
    <property type="project" value="UniProtKB-UniRule"/>
</dbReference>
<dbReference type="GO" id="GO:0032259">
    <property type="term" value="P:methylation"/>
    <property type="evidence" value="ECO:0007669"/>
    <property type="project" value="UniProtKB-KW"/>
</dbReference>
<dbReference type="GO" id="GO:0010038">
    <property type="term" value="P:response to metal ion"/>
    <property type="evidence" value="ECO:0007669"/>
    <property type="project" value="InterPro"/>
</dbReference>
<dbReference type="FunFam" id="3.40.50.150:FF:000101">
    <property type="entry name" value="Thiopurine S-methyltransferase"/>
    <property type="match status" value="1"/>
</dbReference>
<dbReference type="Gene3D" id="3.40.50.150">
    <property type="entry name" value="Vaccinia Virus protein VP39"/>
    <property type="match status" value="1"/>
</dbReference>
<dbReference type="HAMAP" id="MF_00812">
    <property type="entry name" value="Thiopur_methtran"/>
    <property type="match status" value="1"/>
</dbReference>
<dbReference type="InterPro" id="IPR029063">
    <property type="entry name" value="SAM-dependent_MTases_sf"/>
</dbReference>
<dbReference type="InterPro" id="IPR022474">
    <property type="entry name" value="Thiopur_S-MeTfrase_Se/Te_detox"/>
</dbReference>
<dbReference type="InterPro" id="IPR025835">
    <property type="entry name" value="Thiopurine_S-MeTrfase"/>
</dbReference>
<dbReference type="InterPro" id="IPR008854">
    <property type="entry name" value="TPMT"/>
</dbReference>
<dbReference type="NCBIfam" id="NF009732">
    <property type="entry name" value="PRK13255.1"/>
    <property type="match status" value="1"/>
</dbReference>
<dbReference type="NCBIfam" id="TIGR03840">
    <property type="entry name" value="TMPT_Se_Te"/>
    <property type="match status" value="1"/>
</dbReference>
<dbReference type="PANTHER" id="PTHR10259">
    <property type="entry name" value="THIOPURINE S-METHYLTRANSFERASE"/>
    <property type="match status" value="1"/>
</dbReference>
<dbReference type="PANTHER" id="PTHR10259:SF11">
    <property type="entry name" value="THIOPURINE S-METHYLTRANSFERASE"/>
    <property type="match status" value="1"/>
</dbReference>
<dbReference type="Pfam" id="PF05724">
    <property type="entry name" value="TPMT"/>
    <property type="match status" value="1"/>
</dbReference>
<dbReference type="PIRSF" id="PIRSF023956">
    <property type="entry name" value="Thiopurine_S-methyltransferase"/>
    <property type="match status" value="1"/>
</dbReference>
<dbReference type="SUPFAM" id="SSF53335">
    <property type="entry name" value="S-adenosyl-L-methionine-dependent methyltransferases"/>
    <property type="match status" value="1"/>
</dbReference>
<dbReference type="PROSITE" id="PS51585">
    <property type="entry name" value="SAM_MT_TPMT"/>
    <property type="match status" value="1"/>
</dbReference>
<evidence type="ECO:0000255" key="1">
    <source>
        <dbReference type="HAMAP-Rule" id="MF_00812"/>
    </source>
</evidence>
<proteinExistence type="inferred from homology"/>
<feature type="chain" id="PRO_0000220118" description="Thiopurine S-methyltransferase">
    <location>
        <begin position="1"/>
        <end position="219"/>
    </location>
</feature>
<feature type="binding site" evidence="1">
    <location>
        <position position="10"/>
    </location>
    <ligand>
        <name>S-adenosyl-L-methionine</name>
        <dbReference type="ChEBI" id="CHEBI:59789"/>
    </ligand>
</feature>
<feature type="binding site" evidence="1">
    <location>
        <position position="45"/>
    </location>
    <ligand>
        <name>S-adenosyl-L-methionine</name>
        <dbReference type="ChEBI" id="CHEBI:59789"/>
    </ligand>
</feature>
<feature type="binding site" evidence="1">
    <location>
        <position position="66"/>
    </location>
    <ligand>
        <name>S-adenosyl-L-methionine</name>
        <dbReference type="ChEBI" id="CHEBI:59789"/>
    </ligand>
</feature>
<feature type="binding site" evidence="1">
    <location>
        <position position="123"/>
    </location>
    <ligand>
        <name>S-adenosyl-L-methionine</name>
        <dbReference type="ChEBI" id="CHEBI:59789"/>
    </ligand>
</feature>
<sequence>MDADFWLDRWREGRTHFHQTRVTPLLQKYWPTLDVPAGGQVLVPLAGKSLDMVWLAGQGLRVLGVELSQLAVEQFFDENDLRPEIHQSAQGRHYVAGNLELICGDVFALEDATLAACAGVYDRAALVALPEPMRKRYAREVYGRLGRGCRGILITLDYPQDQMEGPPFSVDDAEVQALYAGHTEARLIDRRDILDKEPKFNQRGVARLDTLVYRLERLG</sequence>
<accession>Q7VZM5</accession>
<gene>
    <name evidence="1" type="primary">tpm</name>
    <name type="ordered locus">BP0873</name>
</gene>
<name>TPMT_BORPE</name>
<organism>
    <name type="scientific">Bordetella pertussis (strain Tohama I / ATCC BAA-589 / NCTC 13251)</name>
    <dbReference type="NCBI Taxonomy" id="257313"/>
    <lineage>
        <taxon>Bacteria</taxon>
        <taxon>Pseudomonadati</taxon>
        <taxon>Pseudomonadota</taxon>
        <taxon>Betaproteobacteria</taxon>
        <taxon>Burkholderiales</taxon>
        <taxon>Alcaligenaceae</taxon>
        <taxon>Bordetella</taxon>
    </lineage>
</organism>
<reference key="1">
    <citation type="journal article" date="2003" name="Nat. Genet.">
        <title>Comparative analysis of the genome sequences of Bordetella pertussis, Bordetella parapertussis and Bordetella bronchiseptica.</title>
        <authorList>
            <person name="Parkhill J."/>
            <person name="Sebaihia M."/>
            <person name="Preston A."/>
            <person name="Murphy L.D."/>
            <person name="Thomson N.R."/>
            <person name="Harris D.E."/>
            <person name="Holden M.T.G."/>
            <person name="Churcher C.M."/>
            <person name="Bentley S.D."/>
            <person name="Mungall K.L."/>
            <person name="Cerdeno-Tarraga A.-M."/>
            <person name="Temple L."/>
            <person name="James K.D."/>
            <person name="Harris B."/>
            <person name="Quail M.A."/>
            <person name="Achtman M."/>
            <person name="Atkin R."/>
            <person name="Baker S."/>
            <person name="Basham D."/>
            <person name="Bason N."/>
            <person name="Cherevach I."/>
            <person name="Chillingworth T."/>
            <person name="Collins M."/>
            <person name="Cronin A."/>
            <person name="Davis P."/>
            <person name="Doggett J."/>
            <person name="Feltwell T."/>
            <person name="Goble A."/>
            <person name="Hamlin N."/>
            <person name="Hauser H."/>
            <person name="Holroyd S."/>
            <person name="Jagels K."/>
            <person name="Leather S."/>
            <person name="Moule S."/>
            <person name="Norberczak H."/>
            <person name="O'Neil S."/>
            <person name="Ormond D."/>
            <person name="Price C."/>
            <person name="Rabbinowitsch E."/>
            <person name="Rutter S."/>
            <person name="Sanders M."/>
            <person name="Saunders D."/>
            <person name="Seeger K."/>
            <person name="Sharp S."/>
            <person name="Simmonds M."/>
            <person name="Skelton J."/>
            <person name="Squares R."/>
            <person name="Squares S."/>
            <person name="Stevens K."/>
            <person name="Unwin L."/>
            <person name="Whitehead S."/>
            <person name="Barrell B.G."/>
            <person name="Maskell D.J."/>
        </authorList>
    </citation>
    <scope>NUCLEOTIDE SEQUENCE [LARGE SCALE GENOMIC DNA]</scope>
    <source>
        <strain>Tohama I / ATCC BAA-589 / NCTC 13251</strain>
    </source>
</reference>
<comment type="catalytic activity">
    <reaction evidence="1">
        <text>S-adenosyl-L-methionine + a thiopurine = S-adenosyl-L-homocysteine + a thiopurine S-methylether.</text>
        <dbReference type="EC" id="2.1.1.67"/>
    </reaction>
</comment>
<comment type="subcellular location">
    <subcellularLocation>
        <location evidence="1">Cytoplasm</location>
    </subcellularLocation>
</comment>
<comment type="similarity">
    <text evidence="1">Belongs to the class I-like SAM-binding methyltransferase superfamily. TPMT family.</text>
</comment>